<dbReference type="EC" id="3.5.2.3" evidence="1"/>
<dbReference type="EMBL" id="CP001158">
    <property type="protein sequence ID" value="ACL30138.1"/>
    <property type="molecule type" value="Genomic_DNA"/>
</dbReference>
<dbReference type="RefSeq" id="WP_009874288.1">
    <property type="nucleotide sequence ID" value="NC_011834.1"/>
</dbReference>
<dbReference type="SMR" id="B8D7M3"/>
<dbReference type="KEGG" id="bau:BUAPTUC7_329"/>
<dbReference type="HOGENOM" id="CLU_041558_1_0_6"/>
<dbReference type="UniPathway" id="UPA00070">
    <property type="reaction ID" value="UER00117"/>
</dbReference>
<dbReference type="GO" id="GO:0005829">
    <property type="term" value="C:cytosol"/>
    <property type="evidence" value="ECO:0007669"/>
    <property type="project" value="TreeGrafter"/>
</dbReference>
<dbReference type="GO" id="GO:0004151">
    <property type="term" value="F:dihydroorotase activity"/>
    <property type="evidence" value="ECO:0007669"/>
    <property type="project" value="UniProtKB-UniRule"/>
</dbReference>
<dbReference type="GO" id="GO:0008270">
    <property type="term" value="F:zinc ion binding"/>
    <property type="evidence" value="ECO:0007669"/>
    <property type="project" value="UniProtKB-UniRule"/>
</dbReference>
<dbReference type="GO" id="GO:0006207">
    <property type="term" value="P:'de novo' pyrimidine nucleobase biosynthetic process"/>
    <property type="evidence" value="ECO:0007669"/>
    <property type="project" value="TreeGrafter"/>
</dbReference>
<dbReference type="GO" id="GO:0044205">
    <property type="term" value="P:'de novo' UMP biosynthetic process"/>
    <property type="evidence" value="ECO:0007669"/>
    <property type="project" value="UniProtKB-UniRule"/>
</dbReference>
<dbReference type="CDD" id="cd01294">
    <property type="entry name" value="DHOase"/>
    <property type="match status" value="1"/>
</dbReference>
<dbReference type="Gene3D" id="3.20.20.140">
    <property type="entry name" value="Metal-dependent hydrolases"/>
    <property type="match status" value="1"/>
</dbReference>
<dbReference type="HAMAP" id="MF_00219">
    <property type="entry name" value="PyrC_classII"/>
    <property type="match status" value="1"/>
</dbReference>
<dbReference type="InterPro" id="IPR006680">
    <property type="entry name" value="Amidohydro-rel"/>
</dbReference>
<dbReference type="InterPro" id="IPR004721">
    <property type="entry name" value="DHOdimr"/>
</dbReference>
<dbReference type="InterPro" id="IPR002195">
    <property type="entry name" value="Dihydroorotase_CS"/>
</dbReference>
<dbReference type="InterPro" id="IPR032466">
    <property type="entry name" value="Metal_Hydrolase"/>
</dbReference>
<dbReference type="NCBIfam" id="TIGR00856">
    <property type="entry name" value="pyrC_dimer"/>
    <property type="match status" value="1"/>
</dbReference>
<dbReference type="PANTHER" id="PTHR43137">
    <property type="entry name" value="DIHYDROOROTASE"/>
    <property type="match status" value="1"/>
</dbReference>
<dbReference type="PANTHER" id="PTHR43137:SF1">
    <property type="entry name" value="DIHYDROOROTASE"/>
    <property type="match status" value="1"/>
</dbReference>
<dbReference type="Pfam" id="PF01979">
    <property type="entry name" value="Amidohydro_1"/>
    <property type="match status" value="1"/>
</dbReference>
<dbReference type="PIRSF" id="PIRSF001237">
    <property type="entry name" value="DHOdimr"/>
    <property type="match status" value="1"/>
</dbReference>
<dbReference type="SUPFAM" id="SSF51556">
    <property type="entry name" value="Metallo-dependent hydrolases"/>
    <property type="match status" value="1"/>
</dbReference>
<dbReference type="PROSITE" id="PS00482">
    <property type="entry name" value="DIHYDROOROTASE_1"/>
    <property type="match status" value="1"/>
</dbReference>
<dbReference type="PROSITE" id="PS00483">
    <property type="entry name" value="DIHYDROOROTASE_2"/>
    <property type="match status" value="1"/>
</dbReference>
<evidence type="ECO:0000255" key="1">
    <source>
        <dbReference type="HAMAP-Rule" id="MF_00219"/>
    </source>
</evidence>
<reference key="1">
    <citation type="journal article" date="2009" name="Science">
        <title>The dynamics and time scale of ongoing genomic erosion in symbiotic bacteria.</title>
        <authorList>
            <person name="Moran N.A."/>
            <person name="McLaughlin H.J."/>
            <person name="Sorek R."/>
        </authorList>
    </citation>
    <scope>NUCLEOTIDE SEQUENCE [LARGE SCALE GENOMIC DNA]</scope>
    <source>
        <strain>Tuc7</strain>
    </source>
</reference>
<name>PYRC_BUCAT</name>
<feature type="chain" id="PRO_1000193068" description="Dihydroorotase">
    <location>
        <begin position="1"/>
        <end position="350"/>
    </location>
</feature>
<feature type="active site" evidence="1">
    <location>
        <position position="252"/>
    </location>
</feature>
<feature type="binding site" evidence="1">
    <location>
        <position position="17"/>
    </location>
    <ligand>
        <name>Zn(2+)</name>
        <dbReference type="ChEBI" id="CHEBI:29105"/>
        <label>1</label>
    </ligand>
</feature>
<feature type="binding site" evidence="1">
    <location>
        <begin position="19"/>
        <end position="21"/>
    </location>
    <ligand>
        <name>substrate</name>
    </ligand>
</feature>
<feature type="binding site" evidence="1">
    <location>
        <position position="19"/>
    </location>
    <ligand>
        <name>Zn(2+)</name>
        <dbReference type="ChEBI" id="CHEBI:29105"/>
        <label>1</label>
    </ligand>
</feature>
<feature type="binding site" evidence="1">
    <location>
        <position position="45"/>
    </location>
    <ligand>
        <name>substrate</name>
    </ligand>
</feature>
<feature type="binding site" description="via carbamate group" evidence="1">
    <location>
        <position position="103"/>
    </location>
    <ligand>
        <name>Zn(2+)</name>
        <dbReference type="ChEBI" id="CHEBI:29105"/>
        <label>1</label>
    </ligand>
</feature>
<feature type="binding site" description="via carbamate group" evidence="1">
    <location>
        <position position="103"/>
    </location>
    <ligand>
        <name>Zn(2+)</name>
        <dbReference type="ChEBI" id="CHEBI:29105"/>
        <label>2</label>
    </ligand>
</feature>
<feature type="binding site" evidence="1">
    <location>
        <position position="140"/>
    </location>
    <ligand>
        <name>substrate</name>
    </ligand>
</feature>
<feature type="binding site" evidence="1">
    <location>
        <position position="140"/>
    </location>
    <ligand>
        <name>Zn(2+)</name>
        <dbReference type="ChEBI" id="CHEBI:29105"/>
        <label>2</label>
    </ligand>
</feature>
<feature type="binding site" evidence="1">
    <location>
        <position position="178"/>
    </location>
    <ligand>
        <name>Zn(2+)</name>
        <dbReference type="ChEBI" id="CHEBI:29105"/>
        <label>2</label>
    </ligand>
</feature>
<feature type="binding site" evidence="1">
    <location>
        <position position="224"/>
    </location>
    <ligand>
        <name>substrate</name>
    </ligand>
</feature>
<feature type="binding site" evidence="1">
    <location>
        <position position="252"/>
    </location>
    <ligand>
        <name>Zn(2+)</name>
        <dbReference type="ChEBI" id="CHEBI:29105"/>
        <label>1</label>
    </ligand>
</feature>
<feature type="binding site" evidence="1">
    <location>
        <position position="256"/>
    </location>
    <ligand>
        <name>substrate</name>
    </ligand>
</feature>
<feature type="binding site" evidence="1">
    <location>
        <position position="268"/>
    </location>
    <ligand>
        <name>substrate</name>
    </ligand>
</feature>
<feature type="modified residue" description="N6-carboxylysine" evidence="1">
    <location>
        <position position="103"/>
    </location>
</feature>
<organism>
    <name type="scientific">Buchnera aphidicola subsp. Acyrthosiphon pisum (strain Tuc7)</name>
    <dbReference type="NCBI Taxonomy" id="561501"/>
    <lineage>
        <taxon>Bacteria</taxon>
        <taxon>Pseudomonadati</taxon>
        <taxon>Pseudomonadota</taxon>
        <taxon>Gammaproteobacteria</taxon>
        <taxon>Enterobacterales</taxon>
        <taxon>Erwiniaceae</taxon>
        <taxon>Buchnera</taxon>
    </lineage>
</organism>
<sequence>MSKFVKKIKIIKPDDWHVHLRDNEILNQVIKYTGKFYKRAVIMPNLNSPITSCLKSIAYRNRILKSMHLNYKFKPLMTCYLTNSTSPKELEFGFSKKIFVAAKFYPNGCTTNSKTGIKKISDITPVLECMEKIGMPLLIHGEEINQNIDIYDREAKFIEKTLDPLRKKFPKLKIVLEHITTKESVEYIKNNDVNYLSATITPHHLMLNRNDMFYGGIQPYLYCLPILKKNKHRMALRKAISNGDKHFFLGSDTAPHLHKNKINMLGCAGIFNAPSSLLSYVKVFEEMRALKHLQSFCSENGPKFYNMPINKETITIIKKPCKIIKKINIGRNVIIPFLSGEILNWSIESD</sequence>
<proteinExistence type="inferred from homology"/>
<gene>
    <name evidence="1" type="primary">pyrC</name>
    <name type="ordered locus">BUAPTUC7_329</name>
</gene>
<accession>B8D7M3</accession>
<comment type="function">
    <text evidence="1">Catalyzes the reversible cyclization of carbamoyl aspartate to dihydroorotate.</text>
</comment>
<comment type="catalytic activity">
    <reaction evidence="1">
        <text>(S)-dihydroorotate + H2O = N-carbamoyl-L-aspartate + H(+)</text>
        <dbReference type="Rhea" id="RHEA:24296"/>
        <dbReference type="ChEBI" id="CHEBI:15377"/>
        <dbReference type="ChEBI" id="CHEBI:15378"/>
        <dbReference type="ChEBI" id="CHEBI:30864"/>
        <dbReference type="ChEBI" id="CHEBI:32814"/>
        <dbReference type="EC" id="3.5.2.3"/>
    </reaction>
</comment>
<comment type="cofactor">
    <cofactor evidence="1">
        <name>Zn(2+)</name>
        <dbReference type="ChEBI" id="CHEBI:29105"/>
    </cofactor>
    <text evidence="1">Binds 2 Zn(2+) ions per subunit.</text>
</comment>
<comment type="pathway">
    <text evidence="1">Pyrimidine metabolism; UMP biosynthesis via de novo pathway; (S)-dihydroorotate from bicarbonate: step 3/3.</text>
</comment>
<comment type="subunit">
    <text evidence="1">Homodimer.</text>
</comment>
<comment type="similarity">
    <text evidence="1">Belongs to the metallo-dependent hydrolases superfamily. DHOase family. Class II DHOase subfamily.</text>
</comment>
<protein>
    <recommendedName>
        <fullName evidence="1">Dihydroorotase</fullName>
        <shortName evidence="1">DHOase</shortName>
        <ecNumber evidence="1">3.5.2.3</ecNumber>
    </recommendedName>
</protein>
<keyword id="KW-0378">Hydrolase</keyword>
<keyword id="KW-0479">Metal-binding</keyword>
<keyword id="KW-0665">Pyrimidine biosynthesis</keyword>
<keyword id="KW-0862">Zinc</keyword>